<evidence type="ECO:0000250" key="1"/>
<evidence type="ECO:0000250" key="2">
    <source>
        <dbReference type="UniProtKB" id="Q9BQT8"/>
    </source>
</evidence>
<evidence type="ECO:0000255" key="3"/>
<evidence type="ECO:0000305" key="4"/>
<keyword id="KW-0050">Antiport</keyword>
<keyword id="KW-0445">Lipid transport</keyword>
<keyword id="KW-0472">Membrane</keyword>
<keyword id="KW-0496">Mitochondrion</keyword>
<keyword id="KW-0999">Mitochondrion inner membrane</keyword>
<keyword id="KW-1185">Reference proteome</keyword>
<keyword id="KW-0677">Repeat</keyword>
<keyword id="KW-0812">Transmembrane</keyword>
<keyword id="KW-1133">Transmembrane helix</keyword>
<keyword id="KW-0813">Transport</keyword>
<reference key="1">
    <citation type="journal article" date="2005" name="Science">
        <title>The transcriptional landscape of the mammalian genome.</title>
        <authorList>
            <person name="Carninci P."/>
            <person name="Kasukawa T."/>
            <person name="Katayama S."/>
            <person name="Gough J."/>
            <person name="Frith M.C."/>
            <person name="Maeda N."/>
            <person name="Oyama R."/>
            <person name="Ravasi T."/>
            <person name="Lenhard B."/>
            <person name="Wells C."/>
            <person name="Kodzius R."/>
            <person name="Shimokawa K."/>
            <person name="Bajic V.B."/>
            <person name="Brenner S.E."/>
            <person name="Batalov S."/>
            <person name="Forrest A.R."/>
            <person name="Zavolan M."/>
            <person name="Davis M.J."/>
            <person name="Wilming L.G."/>
            <person name="Aidinis V."/>
            <person name="Allen J.E."/>
            <person name="Ambesi-Impiombato A."/>
            <person name="Apweiler R."/>
            <person name="Aturaliya R.N."/>
            <person name="Bailey T.L."/>
            <person name="Bansal M."/>
            <person name="Baxter L."/>
            <person name="Beisel K.W."/>
            <person name="Bersano T."/>
            <person name="Bono H."/>
            <person name="Chalk A.M."/>
            <person name="Chiu K.P."/>
            <person name="Choudhary V."/>
            <person name="Christoffels A."/>
            <person name="Clutterbuck D.R."/>
            <person name="Crowe M.L."/>
            <person name="Dalla E."/>
            <person name="Dalrymple B.P."/>
            <person name="de Bono B."/>
            <person name="Della Gatta G."/>
            <person name="di Bernardo D."/>
            <person name="Down T."/>
            <person name="Engstrom P."/>
            <person name="Fagiolini M."/>
            <person name="Faulkner G."/>
            <person name="Fletcher C.F."/>
            <person name="Fukushima T."/>
            <person name="Furuno M."/>
            <person name="Futaki S."/>
            <person name="Gariboldi M."/>
            <person name="Georgii-Hemming P."/>
            <person name="Gingeras T.R."/>
            <person name="Gojobori T."/>
            <person name="Green R.E."/>
            <person name="Gustincich S."/>
            <person name="Harbers M."/>
            <person name="Hayashi Y."/>
            <person name="Hensch T.K."/>
            <person name="Hirokawa N."/>
            <person name="Hill D."/>
            <person name="Huminiecki L."/>
            <person name="Iacono M."/>
            <person name="Ikeo K."/>
            <person name="Iwama A."/>
            <person name="Ishikawa T."/>
            <person name="Jakt M."/>
            <person name="Kanapin A."/>
            <person name="Katoh M."/>
            <person name="Kawasawa Y."/>
            <person name="Kelso J."/>
            <person name="Kitamura H."/>
            <person name="Kitano H."/>
            <person name="Kollias G."/>
            <person name="Krishnan S.P."/>
            <person name="Kruger A."/>
            <person name="Kummerfeld S.K."/>
            <person name="Kurochkin I.V."/>
            <person name="Lareau L.F."/>
            <person name="Lazarevic D."/>
            <person name="Lipovich L."/>
            <person name="Liu J."/>
            <person name="Liuni S."/>
            <person name="McWilliam S."/>
            <person name="Madan Babu M."/>
            <person name="Madera M."/>
            <person name="Marchionni L."/>
            <person name="Matsuda H."/>
            <person name="Matsuzawa S."/>
            <person name="Miki H."/>
            <person name="Mignone F."/>
            <person name="Miyake S."/>
            <person name="Morris K."/>
            <person name="Mottagui-Tabar S."/>
            <person name="Mulder N."/>
            <person name="Nakano N."/>
            <person name="Nakauchi H."/>
            <person name="Ng P."/>
            <person name="Nilsson R."/>
            <person name="Nishiguchi S."/>
            <person name="Nishikawa S."/>
            <person name="Nori F."/>
            <person name="Ohara O."/>
            <person name="Okazaki Y."/>
            <person name="Orlando V."/>
            <person name="Pang K.C."/>
            <person name="Pavan W.J."/>
            <person name="Pavesi G."/>
            <person name="Pesole G."/>
            <person name="Petrovsky N."/>
            <person name="Piazza S."/>
            <person name="Reed J."/>
            <person name="Reid J.F."/>
            <person name="Ring B.Z."/>
            <person name="Ringwald M."/>
            <person name="Rost B."/>
            <person name="Ruan Y."/>
            <person name="Salzberg S.L."/>
            <person name="Sandelin A."/>
            <person name="Schneider C."/>
            <person name="Schoenbach C."/>
            <person name="Sekiguchi K."/>
            <person name="Semple C.A."/>
            <person name="Seno S."/>
            <person name="Sessa L."/>
            <person name="Sheng Y."/>
            <person name="Shibata Y."/>
            <person name="Shimada H."/>
            <person name="Shimada K."/>
            <person name="Silva D."/>
            <person name="Sinclair B."/>
            <person name="Sperling S."/>
            <person name="Stupka E."/>
            <person name="Sugiura K."/>
            <person name="Sultana R."/>
            <person name="Takenaka Y."/>
            <person name="Taki K."/>
            <person name="Tammoja K."/>
            <person name="Tan S.L."/>
            <person name="Tang S."/>
            <person name="Taylor M.S."/>
            <person name="Tegner J."/>
            <person name="Teichmann S.A."/>
            <person name="Ueda H.R."/>
            <person name="van Nimwegen E."/>
            <person name="Verardo R."/>
            <person name="Wei C.L."/>
            <person name="Yagi K."/>
            <person name="Yamanishi H."/>
            <person name="Zabarovsky E."/>
            <person name="Zhu S."/>
            <person name="Zimmer A."/>
            <person name="Hide W."/>
            <person name="Bult C."/>
            <person name="Grimmond S.M."/>
            <person name="Teasdale R.D."/>
            <person name="Liu E.T."/>
            <person name="Brusic V."/>
            <person name="Quackenbush J."/>
            <person name="Wahlestedt C."/>
            <person name="Mattick J.S."/>
            <person name="Hume D.A."/>
            <person name="Kai C."/>
            <person name="Sasaki D."/>
            <person name="Tomaru Y."/>
            <person name="Fukuda S."/>
            <person name="Kanamori-Katayama M."/>
            <person name="Suzuki M."/>
            <person name="Aoki J."/>
            <person name="Arakawa T."/>
            <person name="Iida J."/>
            <person name="Imamura K."/>
            <person name="Itoh M."/>
            <person name="Kato T."/>
            <person name="Kawaji H."/>
            <person name="Kawagashira N."/>
            <person name="Kawashima T."/>
            <person name="Kojima M."/>
            <person name="Kondo S."/>
            <person name="Konno H."/>
            <person name="Nakano K."/>
            <person name="Ninomiya N."/>
            <person name="Nishio T."/>
            <person name="Okada M."/>
            <person name="Plessy C."/>
            <person name="Shibata K."/>
            <person name="Shiraki T."/>
            <person name="Suzuki S."/>
            <person name="Tagami M."/>
            <person name="Waki K."/>
            <person name="Watahiki A."/>
            <person name="Okamura-Oho Y."/>
            <person name="Suzuki H."/>
            <person name="Kawai J."/>
            <person name="Hayashizaki Y."/>
        </authorList>
    </citation>
    <scope>NUCLEOTIDE SEQUENCE [LARGE SCALE MRNA]</scope>
    <source>
        <strain>C57BL/6J</strain>
        <tissue>Thymus</tissue>
        <tissue>Vagina</tissue>
    </source>
</reference>
<reference key="2">
    <citation type="journal article" date="2004" name="Genome Res.">
        <title>The status, quality, and expansion of the NIH full-length cDNA project: the Mammalian Gene Collection (MGC).</title>
        <authorList>
            <consortium name="The MGC Project Team"/>
        </authorList>
    </citation>
    <scope>NUCLEOTIDE SEQUENCE [LARGE SCALE MRNA]</scope>
    <source>
        <strain>FVB/N</strain>
        <tissue>Kidney</tissue>
    </source>
</reference>
<reference key="3">
    <citation type="journal article" date="2010" name="Cell">
        <title>A tissue-specific atlas of mouse protein phosphorylation and expression.</title>
        <authorList>
            <person name="Huttlin E.L."/>
            <person name="Jedrychowski M.P."/>
            <person name="Elias J.E."/>
            <person name="Goswami T."/>
            <person name="Rad R."/>
            <person name="Beausoleil S.A."/>
            <person name="Villen J."/>
            <person name="Haas W."/>
            <person name="Sowa M.E."/>
            <person name="Gygi S.P."/>
        </authorList>
    </citation>
    <scope>IDENTIFICATION BY MASS SPECTROMETRY [LARGE SCALE ANALYSIS]</scope>
    <source>
        <tissue>Kidney</tissue>
        <tissue>Liver</tissue>
        <tissue>Spleen</tissue>
        <tissue>Testis</tissue>
    </source>
</reference>
<name>ODC_MOUSE</name>
<protein>
    <recommendedName>
        <fullName>Mitochondrial 2-oxodicarboxylate carrier</fullName>
    </recommendedName>
    <alternativeName>
        <fullName>Solute carrier family 25 member 21</fullName>
    </alternativeName>
</protein>
<sequence>MSASNVSLLHETSRQVAAGGSAGLVEICLMHPLDVVKTRFQVQRSVTDPQSYRTVRGSFQMIFRTEGLFGFYKGIIPPILAETPKRAVKFSTFELYKKFLGYMSLSPGLTFLIAGLGSGLTEAVVVNPFEVVKVGLQVNRNLFKEQPSTFAYARQIIKKEGLGFQGLNKGLTATLGRHGIFNMVYFGFYHNVKNIIPSSKDPTLEFLRKFGIGFVSGTMGSVFNIPFDVAKSRIQGPQPVPGEIKYRSCFKTMEMIYREEGILALYKGLVPKVMRLGPGGGVMLLVYEYTYAWLQENW</sequence>
<dbReference type="EMBL" id="AK036988">
    <property type="protein sequence ID" value="BAC29659.1"/>
    <property type="molecule type" value="mRNA"/>
</dbReference>
<dbReference type="EMBL" id="AK041694">
    <property type="protein sequence ID" value="BAC31036.1"/>
    <property type="molecule type" value="mRNA"/>
</dbReference>
<dbReference type="EMBL" id="BC057980">
    <property type="protein sequence ID" value="AAH57980.1"/>
    <property type="molecule type" value="mRNA"/>
</dbReference>
<dbReference type="CCDS" id="CCDS25925.1"/>
<dbReference type="RefSeq" id="NP_766165.2">
    <property type="nucleotide sequence ID" value="NM_172577.3"/>
</dbReference>
<dbReference type="SMR" id="Q8BZ09"/>
<dbReference type="BioGRID" id="229928">
    <property type="interactions" value="2"/>
</dbReference>
<dbReference type="FunCoup" id="Q8BZ09">
    <property type="interactions" value="863"/>
</dbReference>
<dbReference type="STRING" id="10090.ENSMUSP00000151751"/>
<dbReference type="PhosphoSitePlus" id="Q8BZ09"/>
<dbReference type="jPOST" id="Q8BZ09"/>
<dbReference type="PaxDb" id="10090-ENSMUSP00000039289"/>
<dbReference type="ProteomicsDB" id="294267"/>
<dbReference type="Antibodypedia" id="32">
    <property type="antibodies" value="148 antibodies from 28 providers"/>
</dbReference>
<dbReference type="DNASU" id="217593"/>
<dbReference type="Ensembl" id="ENSMUST00000044634.12">
    <property type="protein sequence ID" value="ENSMUSP00000039289.6"/>
    <property type="gene ID" value="ENSMUSG00000035472.15"/>
</dbReference>
<dbReference type="GeneID" id="217593"/>
<dbReference type="KEGG" id="mmu:217593"/>
<dbReference type="UCSC" id="uc007npj.2">
    <property type="organism name" value="mouse"/>
</dbReference>
<dbReference type="AGR" id="MGI:2445059"/>
<dbReference type="CTD" id="89874"/>
<dbReference type="MGI" id="MGI:2445059">
    <property type="gene designation" value="Slc25a21"/>
</dbReference>
<dbReference type="VEuPathDB" id="HostDB:ENSMUSG00000035472"/>
<dbReference type="eggNOG" id="KOG0754">
    <property type="taxonomic scope" value="Eukaryota"/>
</dbReference>
<dbReference type="GeneTree" id="ENSGT00730000111119"/>
<dbReference type="HOGENOM" id="CLU_015166_5_2_1"/>
<dbReference type="InParanoid" id="Q8BZ09"/>
<dbReference type="OMA" id="LPFQYQF"/>
<dbReference type="OrthoDB" id="434783at2759"/>
<dbReference type="TreeFam" id="TF314035"/>
<dbReference type="Reactome" id="R-MMU-71064">
    <property type="pathway name" value="Lysine catabolism"/>
</dbReference>
<dbReference type="BioGRID-ORCS" id="217593">
    <property type="hits" value="2 hits in 77 CRISPR screens"/>
</dbReference>
<dbReference type="ChiTaRS" id="Slc25a21">
    <property type="organism name" value="mouse"/>
</dbReference>
<dbReference type="PRO" id="PR:Q8BZ09"/>
<dbReference type="Proteomes" id="UP000000589">
    <property type="component" value="Chromosome 12"/>
</dbReference>
<dbReference type="RNAct" id="Q8BZ09">
    <property type="molecule type" value="protein"/>
</dbReference>
<dbReference type="Bgee" id="ENSMUSG00000035472">
    <property type="expression patterns" value="Expressed in proximal tubule and 56 other cell types or tissues"/>
</dbReference>
<dbReference type="ExpressionAtlas" id="Q8BZ09">
    <property type="expression patterns" value="baseline and differential"/>
</dbReference>
<dbReference type="GO" id="GO:0005743">
    <property type="term" value="C:mitochondrial inner membrane"/>
    <property type="evidence" value="ECO:0007669"/>
    <property type="project" value="UniProtKB-SubCell"/>
</dbReference>
<dbReference type="GO" id="GO:0005739">
    <property type="term" value="C:mitochondrion"/>
    <property type="evidence" value="ECO:0007005"/>
    <property type="project" value="MGI"/>
</dbReference>
<dbReference type="GO" id="GO:0015139">
    <property type="term" value="F:alpha-ketoglutarate transmembrane transporter activity"/>
    <property type="evidence" value="ECO:0007669"/>
    <property type="project" value="Ensembl"/>
</dbReference>
<dbReference type="GO" id="GO:0015297">
    <property type="term" value="F:antiporter activity"/>
    <property type="evidence" value="ECO:0007669"/>
    <property type="project" value="UniProtKB-KW"/>
</dbReference>
<dbReference type="GO" id="GO:0006869">
    <property type="term" value="P:lipid transport"/>
    <property type="evidence" value="ECO:0007669"/>
    <property type="project" value="UniProtKB-KW"/>
</dbReference>
<dbReference type="GO" id="GO:1990550">
    <property type="term" value="P:mitochondrial alpha-ketoglutarate transmembrane transport"/>
    <property type="evidence" value="ECO:0007669"/>
    <property type="project" value="Ensembl"/>
</dbReference>
<dbReference type="FunFam" id="1.50.40.10:FF:000048">
    <property type="entry name" value="mitochondrial 2-oxodicarboxylate carrier isoform X2"/>
    <property type="match status" value="1"/>
</dbReference>
<dbReference type="Gene3D" id="1.50.40.10">
    <property type="entry name" value="Mitochondrial carrier domain"/>
    <property type="match status" value="2"/>
</dbReference>
<dbReference type="InterPro" id="IPR051752">
    <property type="entry name" value="Mito_2-oxodicarb_carrier"/>
</dbReference>
<dbReference type="InterPro" id="IPR018108">
    <property type="entry name" value="Mitochondrial_sb/sol_carrier"/>
</dbReference>
<dbReference type="InterPro" id="IPR023395">
    <property type="entry name" value="Mt_carrier_dom_sf"/>
</dbReference>
<dbReference type="PANTHER" id="PTHR46356">
    <property type="entry name" value="MITOCHONDRIAL 2-OXODICARBOXYLATE CARRIER"/>
    <property type="match status" value="1"/>
</dbReference>
<dbReference type="PANTHER" id="PTHR46356:SF1">
    <property type="entry name" value="MITOCHONDRIAL 2-OXODICARBOXYLATE CARRIER"/>
    <property type="match status" value="1"/>
</dbReference>
<dbReference type="Pfam" id="PF00153">
    <property type="entry name" value="Mito_carr"/>
    <property type="match status" value="3"/>
</dbReference>
<dbReference type="SUPFAM" id="SSF103506">
    <property type="entry name" value="Mitochondrial carrier"/>
    <property type="match status" value="1"/>
</dbReference>
<dbReference type="PROSITE" id="PS50920">
    <property type="entry name" value="SOLCAR"/>
    <property type="match status" value="3"/>
</dbReference>
<gene>
    <name type="primary">Slc25a21</name>
    <name type="synonym">Odc</name>
</gene>
<feature type="chain" id="PRO_0000090645" description="Mitochondrial 2-oxodicarboxylate carrier">
    <location>
        <begin position="1"/>
        <end position="298"/>
    </location>
</feature>
<feature type="transmembrane region" description="Helical; Name=1" evidence="3">
    <location>
        <begin position="16"/>
        <end position="36"/>
    </location>
</feature>
<feature type="transmembrane region" description="Helical; Name=2" evidence="3">
    <location>
        <begin position="69"/>
        <end position="88"/>
    </location>
</feature>
<feature type="transmembrane region" description="Helical; Name=3" evidence="3">
    <location>
        <begin position="112"/>
        <end position="132"/>
    </location>
</feature>
<feature type="transmembrane region" description="Helical; Name=4" evidence="3">
    <location>
        <begin position="166"/>
        <end position="186"/>
    </location>
</feature>
<feature type="transmembrane region" description="Helical; Name=5" evidence="3">
    <location>
        <begin position="204"/>
        <end position="224"/>
    </location>
</feature>
<feature type="transmembrane region" description="Helical; Name=6" evidence="3">
    <location>
        <begin position="276"/>
        <end position="296"/>
    </location>
</feature>
<feature type="repeat" description="Solcar 1">
    <location>
        <begin position="10"/>
        <end position="99"/>
    </location>
</feature>
<feature type="repeat" description="Solcar 2">
    <location>
        <begin position="106"/>
        <end position="195"/>
    </location>
</feature>
<feature type="repeat" description="Solcar 3">
    <location>
        <begin position="204"/>
        <end position="293"/>
    </location>
</feature>
<feature type="sequence conflict" description="In Ref. 1; BAC31036." evidence="4" ref="1">
    <original>N</original>
    <variation>D</variation>
    <location>
        <position position="168"/>
    </location>
</feature>
<proteinExistence type="evidence at protein level"/>
<comment type="function">
    <text evidence="2">Transports dicarboxylates across the inner membranes of mitochondria by a counter-exchange mechanism. Can transport 2-oxoadipate (2-oxohexanedioate), 2-oxoglutarate, adipate (hexanedioate), glutarate, and to a lesser extent, pimelate (heptanedioate), 2-oxopimelate (2-oxoheptanedioate), 2-aminoadipate (2-aminohexanedioate), oxaloacetate, and citrate. Plays a central role in catabolism of lysine, hydroxylysine, and tryptophan, by transporting common metabolite intermediates (such as 2-oxoadipate) into the mitochondria, where it is converted into acetyl-CoA and can enter the citric acid (TCA) cycle.</text>
</comment>
<comment type="catalytic activity">
    <reaction evidence="2">
        <text>2-oxoadipate(in) + 2-oxoglutarate(out) = 2-oxoadipate(out) + 2-oxoglutarate(in)</text>
        <dbReference type="Rhea" id="RHEA:71739"/>
        <dbReference type="ChEBI" id="CHEBI:16810"/>
        <dbReference type="ChEBI" id="CHEBI:57499"/>
    </reaction>
</comment>
<comment type="catalytic activity">
    <reaction evidence="2">
        <text>hexanedioate(in) + 2-oxoglutarate(out) = hexanedioate(out) + 2-oxoglutarate(in)</text>
        <dbReference type="Rhea" id="RHEA:71743"/>
        <dbReference type="ChEBI" id="CHEBI:16810"/>
        <dbReference type="ChEBI" id="CHEBI:17128"/>
    </reaction>
</comment>
<comment type="catalytic activity">
    <reaction evidence="2">
        <text>L-2-aminoadipate(in) + 2-oxoglutarate(out) = L-2-aminoadipate(out) + 2-oxoglutarate(in)</text>
        <dbReference type="Rhea" id="RHEA:71747"/>
        <dbReference type="ChEBI" id="CHEBI:16810"/>
        <dbReference type="ChEBI" id="CHEBI:58672"/>
    </reaction>
</comment>
<comment type="catalytic activity">
    <reaction evidence="2">
        <text>glutarate(in) + 2-oxoglutarate(out) = glutarate(out) + 2-oxoglutarate(in)</text>
        <dbReference type="Rhea" id="RHEA:71751"/>
        <dbReference type="ChEBI" id="CHEBI:16810"/>
        <dbReference type="ChEBI" id="CHEBI:30921"/>
    </reaction>
</comment>
<comment type="catalytic activity">
    <reaction evidence="2">
        <text>2-oxoheptanedioate(in) + 2-oxoglutarate(out) = 2-oxoheptanedioate(out) + 2-oxoglutarate(in)</text>
        <dbReference type="Rhea" id="RHEA:71755"/>
        <dbReference type="ChEBI" id="CHEBI:16810"/>
        <dbReference type="ChEBI" id="CHEBI:72701"/>
    </reaction>
</comment>
<comment type="catalytic activity">
    <reaction evidence="2">
        <text>heptanedioate(in) + 2-oxoglutarate(out) = heptanedioate(out) + 2-oxoglutarate(in)</text>
        <dbReference type="Rhea" id="RHEA:71759"/>
        <dbReference type="ChEBI" id="CHEBI:16810"/>
        <dbReference type="ChEBI" id="CHEBI:36165"/>
    </reaction>
</comment>
<comment type="catalytic activity">
    <reaction evidence="2">
        <text>citrate(in) + 2-oxoglutarate(out) = citrate(out) + 2-oxoglutarate(in)</text>
        <dbReference type="Rhea" id="RHEA:71763"/>
        <dbReference type="ChEBI" id="CHEBI:16810"/>
        <dbReference type="ChEBI" id="CHEBI:16947"/>
    </reaction>
</comment>
<comment type="subcellular location">
    <subcellularLocation>
        <location evidence="1">Mitochondrion inner membrane</location>
        <topology evidence="1">Multi-pass membrane protein</topology>
    </subcellularLocation>
</comment>
<comment type="similarity">
    <text evidence="4">Belongs to the mitochondrial carrier (TC 2.A.29) family.</text>
</comment>
<accession>Q8BZ09</accession>
<accession>Q8BY72</accession>
<organism>
    <name type="scientific">Mus musculus</name>
    <name type="common">Mouse</name>
    <dbReference type="NCBI Taxonomy" id="10090"/>
    <lineage>
        <taxon>Eukaryota</taxon>
        <taxon>Metazoa</taxon>
        <taxon>Chordata</taxon>
        <taxon>Craniata</taxon>
        <taxon>Vertebrata</taxon>
        <taxon>Euteleostomi</taxon>
        <taxon>Mammalia</taxon>
        <taxon>Eutheria</taxon>
        <taxon>Euarchontoglires</taxon>
        <taxon>Glires</taxon>
        <taxon>Rodentia</taxon>
        <taxon>Myomorpha</taxon>
        <taxon>Muroidea</taxon>
        <taxon>Muridae</taxon>
        <taxon>Murinae</taxon>
        <taxon>Mus</taxon>
        <taxon>Mus</taxon>
    </lineage>
</organism>